<sequence length="784" mass="87670">MNPERSERIEIPVLPLRDVVVYPHMVIPLFVGREKSIRCLEAAMDHDKKIMLVAQKEASTDEPGINDLFSVGTVASILQMLKLPDATVKVLVEGLQRARISALSDNGDHFTAKAEYLTSPEIEEREQEVLVRTAINQFEGYIKLNKKIPPEVLTSLNSIDDAARLADTVAAHMPLKLSDKQSVLEMSDVDERLEYLMAMMESEIDLLQVEKRIRNRVKKQMEKSQREYYLNEQMKAIQKELGEMDDAPDENEALKRKIDAARMPKEAREKTEAELQKLKMMSPMSAEATVVRGYIDWMVQVPWNARSKVEKDLQKRRQTLDTDHFGLERVKDRILEYLAVQSRVSKIKGPILCLVGPPGVGKTSLGQSIAKATGRKYVRMALGGVRDEAEIRGHRRTYIGSMPGKLIQKMAKVGVKNPLFLLDEIDKMSSDMRGDPASALLEVLDPEQNIAFNDHYLEVDYDLSDVMFVATSNSMNIPAPLLDRMEVIRLSGYTEDEKLNIAKKHLLSKQIERNALKEHELIVDDSAIVGIIRYYTRERGVRSLERELSKLCRKAVKTLLMDKSVKHIEINADNLKDYLGVQRYDYGRADSENRVGQVTGLAWTEVGGDLLTIETACVPGKGKLTYTGSLGEVMQESIQAALTVVRARAEKLGINGDFYEKRDIHVHVPEGATPKDGPSAGIAMCTALVSCLTGNPVRADVAMTGEITLRGQVLPIGGLKEKLLAAHRGGIKTVLIPDENKRDLEEIPENVIADLDIHPVKRIEEVLALALQNAPYGMQVASVK</sequence>
<comment type="function">
    <text evidence="1">ATP-dependent serine protease that mediates the selective degradation of mutant and abnormal proteins as well as certain short-lived regulatory proteins. Required for cellular homeostasis and for survival from DNA damage and developmental changes induced by stress. Degrades polypeptides processively to yield small peptide fragments that are 5 to 10 amino acids long. Binds to DNA in a double-stranded, site-specific manner.</text>
</comment>
<comment type="catalytic activity">
    <reaction evidence="1">
        <text>Hydrolysis of proteins in presence of ATP.</text>
        <dbReference type="EC" id="3.4.21.53"/>
    </reaction>
</comment>
<comment type="subunit">
    <text evidence="1">Homohexamer. Organized in a ring with a central cavity.</text>
</comment>
<comment type="subcellular location">
    <subcellularLocation>
        <location>Cytoplasm</location>
    </subcellularLocation>
</comment>
<comment type="induction">
    <text evidence="1 4">By heat shock.</text>
</comment>
<comment type="similarity">
    <text evidence="1">Belongs to the peptidase S16 family.</text>
</comment>
<evidence type="ECO:0000255" key="1">
    <source>
        <dbReference type="HAMAP-Rule" id="MF_01973"/>
    </source>
</evidence>
<evidence type="ECO:0000255" key="2">
    <source>
        <dbReference type="PROSITE-ProRule" id="PRU01122"/>
    </source>
</evidence>
<evidence type="ECO:0000255" key="3">
    <source>
        <dbReference type="PROSITE-ProRule" id="PRU01123"/>
    </source>
</evidence>
<evidence type="ECO:0000269" key="4">
    <source>
    </source>
</evidence>
<name>LON_ERWAM</name>
<protein>
    <recommendedName>
        <fullName evidence="1">Lon protease</fullName>
        <ecNumber evidence="1">3.4.21.53</ecNumber>
    </recommendedName>
    <alternativeName>
        <fullName evidence="1">ATP-dependent protease La</fullName>
    </alternativeName>
</protein>
<gene>
    <name evidence="1" type="primary">lon</name>
</gene>
<keyword id="KW-0067">ATP-binding</keyword>
<keyword id="KW-0963">Cytoplasm</keyword>
<keyword id="KW-0378">Hydrolase</keyword>
<keyword id="KW-0547">Nucleotide-binding</keyword>
<keyword id="KW-0645">Protease</keyword>
<keyword id="KW-0720">Serine protease</keyword>
<keyword id="KW-0346">Stress response</keyword>
<reference key="1">
    <citation type="journal article" date="1995" name="J. Bacteriol.">
        <title>Cloning, expression, and characterization of the lon gene of Erwinia amylovora: evidence for a heat shock response.</title>
        <authorList>
            <person name="Eastgate J.A."/>
            <person name="Taylor N."/>
            <person name="Coleman M.J."/>
            <person name="Healy B."/>
            <person name="Thompson L."/>
            <person name="Roberts I.S."/>
        </authorList>
    </citation>
    <scope>NUCLEOTIDE SEQUENCE [GENOMIC DNA]</scope>
    <scope>INDUCTION</scope>
    <source>
        <strain>OT1</strain>
    </source>
</reference>
<feature type="chain" id="PRO_0000076135" description="Lon protease">
    <location>
        <begin position="1"/>
        <end position="784"/>
    </location>
</feature>
<feature type="domain" description="Lon N-terminal" evidence="3">
    <location>
        <begin position="11"/>
        <end position="204"/>
    </location>
</feature>
<feature type="domain" description="Lon proteolytic" evidence="2">
    <location>
        <begin position="592"/>
        <end position="773"/>
    </location>
</feature>
<feature type="active site" evidence="1">
    <location>
        <position position="679"/>
    </location>
</feature>
<feature type="active site" evidence="1">
    <location>
        <position position="722"/>
    </location>
</feature>
<feature type="binding site" evidence="1">
    <location>
        <begin position="356"/>
        <end position="363"/>
    </location>
    <ligand>
        <name>ATP</name>
        <dbReference type="ChEBI" id="CHEBI:30616"/>
    </ligand>
</feature>
<organism>
    <name type="scientific">Erwinia amylovora</name>
    <name type="common">Fire blight bacteria</name>
    <dbReference type="NCBI Taxonomy" id="552"/>
    <lineage>
        <taxon>Bacteria</taxon>
        <taxon>Pseudomonadati</taxon>
        <taxon>Pseudomonadota</taxon>
        <taxon>Gammaproteobacteria</taxon>
        <taxon>Enterobacterales</taxon>
        <taxon>Erwiniaceae</taxon>
        <taxon>Erwinia</taxon>
    </lineage>
</organism>
<dbReference type="EC" id="3.4.21.53" evidence="1"/>
<dbReference type="EMBL" id="X77706">
    <property type="protein sequence ID" value="CAA54779.1"/>
    <property type="molecule type" value="Genomic_DNA"/>
</dbReference>
<dbReference type="PIR" id="S47270">
    <property type="entry name" value="S47270"/>
</dbReference>
<dbReference type="SMR" id="P46067"/>
<dbReference type="MEROPS" id="S16.001"/>
<dbReference type="BRENDA" id="3.4.21.53">
    <property type="organism ID" value="2136"/>
</dbReference>
<dbReference type="GO" id="GO:0005737">
    <property type="term" value="C:cytoplasm"/>
    <property type="evidence" value="ECO:0007669"/>
    <property type="project" value="UniProtKB-SubCell"/>
</dbReference>
<dbReference type="GO" id="GO:0005524">
    <property type="term" value="F:ATP binding"/>
    <property type="evidence" value="ECO:0007669"/>
    <property type="project" value="UniProtKB-UniRule"/>
</dbReference>
<dbReference type="GO" id="GO:0016887">
    <property type="term" value="F:ATP hydrolysis activity"/>
    <property type="evidence" value="ECO:0007669"/>
    <property type="project" value="UniProtKB-UniRule"/>
</dbReference>
<dbReference type="GO" id="GO:0004176">
    <property type="term" value="F:ATP-dependent peptidase activity"/>
    <property type="evidence" value="ECO:0007669"/>
    <property type="project" value="UniProtKB-UniRule"/>
</dbReference>
<dbReference type="GO" id="GO:0043565">
    <property type="term" value="F:sequence-specific DNA binding"/>
    <property type="evidence" value="ECO:0007669"/>
    <property type="project" value="UniProtKB-UniRule"/>
</dbReference>
<dbReference type="GO" id="GO:0004252">
    <property type="term" value="F:serine-type endopeptidase activity"/>
    <property type="evidence" value="ECO:0007669"/>
    <property type="project" value="UniProtKB-UniRule"/>
</dbReference>
<dbReference type="GO" id="GO:0034605">
    <property type="term" value="P:cellular response to heat"/>
    <property type="evidence" value="ECO:0007669"/>
    <property type="project" value="UniProtKB-UniRule"/>
</dbReference>
<dbReference type="GO" id="GO:0006515">
    <property type="term" value="P:protein quality control for misfolded or incompletely synthesized proteins"/>
    <property type="evidence" value="ECO:0007669"/>
    <property type="project" value="UniProtKB-UniRule"/>
</dbReference>
<dbReference type="CDD" id="cd19500">
    <property type="entry name" value="RecA-like_Lon"/>
    <property type="match status" value="1"/>
</dbReference>
<dbReference type="FunFam" id="1.10.8.60:FF:000035">
    <property type="entry name" value="Lon protease"/>
    <property type="match status" value="1"/>
</dbReference>
<dbReference type="FunFam" id="1.20.58.1480:FF:000001">
    <property type="entry name" value="Lon protease"/>
    <property type="match status" value="1"/>
</dbReference>
<dbReference type="FunFam" id="2.30.130.40:FF:000001">
    <property type="entry name" value="Lon protease"/>
    <property type="match status" value="1"/>
</dbReference>
<dbReference type="FunFam" id="3.30.230.10:FF:000010">
    <property type="entry name" value="Lon protease"/>
    <property type="match status" value="1"/>
</dbReference>
<dbReference type="FunFam" id="1.20.5.5270:FF:000002">
    <property type="entry name" value="Lon protease homolog"/>
    <property type="match status" value="1"/>
</dbReference>
<dbReference type="FunFam" id="3.40.50.300:FF:000021">
    <property type="entry name" value="Lon protease homolog"/>
    <property type="match status" value="1"/>
</dbReference>
<dbReference type="Gene3D" id="1.10.8.60">
    <property type="match status" value="1"/>
</dbReference>
<dbReference type="Gene3D" id="1.20.5.5270">
    <property type="match status" value="1"/>
</dbReference>
<dbReference type="Gene3D" id="1.20.58.1480">
    <property type="match status" value="1"/>
</dbReference>
<dbReference type="Gene3D" id="3.30.230.10">
    <property type="match status" value="1"/>
</dbReference>
<dbReference type="Gene3D" id="2.30.130.40">
    <property type="entry name" value="LON domain-like"/>
    <property type="match status" value="1"/>
</dbReference>
<dbReference type="Gene3D" id="3.40.50.300">
    <property type="entry name" value="P-loop containing nucleotide triphosphate hydrolases"/>
    <property type="match status" value="1"/>
</dbReference>
<dbReference type="HAMAP" id="MF_01973">
    <property type="entry name" value="lon_bact"/>
    <property type="match status" value="1"/>
</dbReference>
<dbReference type="InterPro" id="IPR003593">
    <property type="entry name" value="AAA+_ATPase"/>
</dbReference>
<dbReference type="InterPro" id="IPR003959">
    <property type="entry name" value="ATPase_AAA_core"/>
</dbReference>
<dbReference type="InterPro" id="IPR027543">
    <property type="entry name" value="Lon_bac"/>
</dbReference>
<dbReference type="InterPro" id="IPR004815">
    <property type="entry name" value="Lon_bac/euk-typ"/>
</dbReference>
<dbReference type="InterPro" id="IPR054594">
    <property type="entry name" value="Lon_lid"/>
</dbReference>
<dbReference type="InterPro" id="IPR008269">
    <property type="entry name" value="Lon_proteolytic"/>
</dbReference>
<dbReference type="InterPro" id="IPR027065">
    <property type="entry name" value="Lon_Prtase"/>
</dbReference>
<dbReference type="InterPro" id="IPR003111">
    <property type="entry name" value="Lon_prtase_N"/>
</dbReference>
<dbReference type="InterPro" id="IPR046336">
    <property type="entry name" value="Lon_prtase_N_sf"/>
</dbReference>
<dbReference type="InterPro" id="IPR027417">
    <property type="entry name" value="P-loop_NTPase"/>
</dbReference>
<dbReference type="InterPro" id="IPR008268">
    <property type="entry name" value="Peptidase_S16_AS"/>
</dbReference>
<dbReference type="InterPro" id="IPR015947">
    <property type="entry name" value="PUA-like_sf"/>
</dbReference>
<dbReference type="InterPro" id="IPR020568">
    <property type="entry name" value="Ribosomal_Su5_D2-typ_SF"/>
</dbReference>
<dbReference type="InterPro" id="IPR014721">
    <property type="entry name" value="Ribsml_uS5_D2-typ_fold_subgr"/>
</dbReference>
<dbReference type="NCBIfam" id="TIGR00763">
    <property type="entry name" value="lon"/>
    <property type="match status" value="1"/>
</dbReference>
<dbReference type="NCBIfam" id="NF008053">
    <property type="entry name" value="PRK10787.1"/>
    <property type="match status" value="1"/>
</dbReference>
<dbReference type="PANTHER" id="PTHR10046">
    <property type="entry name" value="ATP DEPENDENT LON PROTEASE FAMILY MEMBER"/>
    <property type="match status" value="1"/>
</dbReference>
<dbReference type="Pfam" id="PF00004">
    <property type="entry name" value="AAA"/>
    <property type="match status" value="1"/>
</dbReference>
<dbReference type="Pfam" id="PF05362">
    <property type="entry name" value="Lon_C"/>
    <property type="match status" value="1"/>
</dbReference>
<dbReference type="Pfam" id="PF22667">
    <property type="entry name" value="Lon_lid"/>
    <property type="match status" value="1"/>
</dbReference>
<dbReference type="Pfam" id="PF02190">
    <property type="entry name" value="LON_substr_bdg"/>
    <property type="match status" value="1"/>
</dbReference>
<dbReference type="PIRSF" id="PIRSF001174">
    <property type="entry name" value="Lon_proteas"/>
    <property type="match status" value="1"/>
</dbReference>
<dbReference type="PRINTS" id="PR00830">
    <property type="entry name" value="ENDOLAPTASE"/>
</dbReference>
<dbReference type="SMART" id="SM00382">
    <property type="entry name" value="AAA"/>
    <property type="match status" value="1"/>
</dbReference>
<dbReference type="SMART" id="SM00464">
    <property type="entry name" value="LON"/>
    <property type="match status" value="1"/>
</dbReference>
<dbReference type="SUPFAM" id="SSF52540">
    <property type="entry name" value="P-loop containing nucleoside triphosphate hydrolases"/>
    <property type="match status" value="1"/>
</dbReference>
<dbReference type="SUPFAM" id="SSF88697">
    <property type="entry name" value="PUA domain-like"/>
    <property type="match status" value="1"/>
</dbReference>
<dbReference type="SUPFAM" id="SSF54211">
    <property type="entry name" value="Ribosomal protein S5 domain 2-like"/>
    <property type="match status" value="1"/>
</dbReference>
<dbReference type="PROSITE" id="PS51787">
    <property type="entry name" value="LON_N"/>
    <property type="match status" value="1"/>
</dbReference>
<dbReference type="PROSITE" id="PS51786">
    <property type="entry name" value="LON_PROTEOLYTIC"/>
    <property type="match status" value="1"/>
</dbReference>
<dbReference type="PROSITE" id="PS01046">
    <property type="entry name" value="LON_SER"/>
    <property type="match status" value="1"/>
</dbReference>
<proteinExistence type="evidence at transcript level"/>
<accession>P46067</accession>